<reference key="1">
    <citation type="journal article" date="1997" name="Nature">
        <title>The complete genome sequence of the Gram-positive bacterium Bacillus subtilis.</title>
        <authorList>
            <person name="Kunst F."/>
            <person name="Ogasawara N."/>
            <person name="Moszer I."/>
            <person name="Albertini A.M."/>
            <person name="Alloni G."/>
            <person name="Azevedo V."/>
            <person name="Bertero M.G."/>
            <person name="Bessieres P."/>
            <person name="Bolotin A."/>
            <person name="Borchert S."/>
            <person name="Borriss R."/>
            <person name="Boursier L."/>
            <person name="Brans A."/>
            <person name="Braun M."/>
            <person name="Brignell S.C."/>
            <person name="Bron S."/>
            <person name="Brouillet S."/>
            <person name="Bruschi C.V."/>
            <person name="Caldwell B."/>
            <person name="Capuano V."/>
            <person name="Carter N.M."/>
            <person name="Choi S.-K."/>
            <person name="Codani J.-J."/>
            <person name="Connerton I.F."/>
            <person name="Cummings N.J."/>
            <person name="Daniel R.A."/>
            <person name="Denizot F."/>
            <person name="Devine K.M."/>
            <person name="Duesterhoeft A."/>
            <person name="Ehrlich S.D."/>
            <person name="Emmerson P.T."/>
            <person name="Entian K.-D."/>
            <person name="Errington J."/>
            <person name="Fabret C."/>
            <person name="Ferrari E."/>
            <person name="Foulger D."/>
            <person name="Fritz C."/>
            <person name="Fujita M."/>
            <person name="Fujita Y."/>
            <person name="Fuma S."/>
            <person name="Galizzi A."/>
            <person name="Galleron N."/>
            <person name="Ghim S.-Y."/>
            <person name="Glaser P."/>
            <person name="Goffeau A."/>
            <person name="Golightly E.J."/>
            <person name="Grandi G."/>
            <person name="Guiseppi G."/>
            <person name="Guy B.J."/>
            <person name="Haga K."/>
            <person name="Haiech J."/>
            <person name="Harwood C.R."/>
            <person name="Henaut A."/>
            <person name="Hilbert H."/>
            <person name="Holsappel S."/>
            <person name="Hosono S."/>
            <person name="Hullo M.-F."/>
            <person name="Itaya M."/>
            <person name="Jones L.-M."/>
            <person name="Joris B."/>
            <person name="Karamata D."/>
            <person name="Kasahara Y."/>
            <person name="Klaerr-Blanchard M."/>
            <person name="Klein C."/>
            <person name="Kobayashi Y."/>
            <person name="Koetter P."/>
            <person name="Koningstein G."/>
            <person name="Krogh S."/>
            <person name="Kumano M."/>
            <person name="Kurita K."/>
            <person name="Lapidus A."/>
            <person name="Lardinois S."/>
            <person name="Lauber J."/>
            <person name="Lazarevic V."/>
            <person name="Lee S.-M."/>
            <person name="Levine A."/>
            <person name="Liu H."/>
            <person name="Masuda S."/>
            <person name="Mauel C."/>
            <person name="Medigue C."/>
            <person name="Medina N."/>
            <person name="Mellado R.P."/>
            <person name="Mizuno M."/>
            <person name="Moestl D."/>
            <person name="Nakai S."/>
            <person name="Noback M."/>
            <person name="Noone D."/>
            <person name="O'Reilly M."/>
            <person name="Ogawa K."/>
            <person name="Ogiwara A."/>
            <person name="Oudega B."/>
            <person name="Park S.-H."/>
            <person name="Parro V."/>
            <person name="Pohl T.M."/>
            <person name="Portetelle D."/>
            <person name="Porwollik S."/>
            <person name="Prescott A.M."/>
            <person name="Presecan E."/>
            <person name="Pujic P."/>
            <person name="Purnelle B."/>
            <person name="Rapoport G."/>
            <person name="Rey M."/>
            <person name="Reynolds S."/>
            <person name="Rieger M."/>
            <person name="Rivolta C."/>
            <person name="Rocha E."/>
            <person name="Roche B."/>
            <person name="Rose M."/>
            <person name="Sadaie Y."/>
            <person name="Sato T."/>
            <person name="Scanlan E."/>
            <person name="Schleich S."/>
            <person name="Schroeter R."/>
            <person name="Scoffone F."/>
            <person name="Sekiguchi J."/>
            <person name="Sekowska A."/>
            <person name="Seror S.J."/>
            <person name="Serror P."/>
            <person name="Shin B.-S."/>
            <person name="Soldo B."/>
            <person name="Sorokin A."/>
            <person name="Tacconi E."/>
            <person name="Takagi T."/>
            <person name="Takahashi H."/>
            <person name="Takemaru K."/>
            <person name="Takeuchi M."/>
            <person name="Tamakoshi A."/>
            <person name="Tanaka T."/>
            <person name="Terpstra P."/>
            <person name="Tognoni A."/>
            <person name="Tosato V."/>
            <person name="Uchiyama S."/>
            <person name="Vandenbol M."/>
            <person name="Vannier F."/>
            <person name="Vassarotti A."/>
            <person name="Viari A."/>
            <person name="Wambutt R."/>
            <person name="Wedler E."/>
            <person name="Wedler H."/>
            <person name="Weitzenegger T."/>
            <person name="Winters P."/>
            <person name="Wipat A."/>
            <person name="Yamamoto H."/>
            <person name="Yamane K."/>
            <person name="Yasumoto K."/>
            <person name="Yata K."/>
            <person name="Yoshida K."/>
            <person name="Yoshikawa H.-F."/>
            <person name="Zumstein E."/>
            <person name="Yoshikawa H."/>
            <person name="Danchin A."/>
        </authorList>
    </citation>
    <scope>NUCLEOTIDE SEQUENCE [LARGE SCALE GENOMIC DNA]</scope>
    <source>
        <strain>168</strain>
    </source>
</reference>
<reference key="2">
    <citation type="journal article" date="2004" name="J. Bacteriol.">
        <title>spoIVH (ykvV), a requisite cortex formation gene, is expressed in both sporulating compartments of Bacillus subtilis.</title>
        <authorList>
            <person name="Imamura D."/>
            <person name="Kobayashi K."/>
            <person name="Sekiguchi J."/>
            <person name="Ogasawara N."/>
            <person name="Takeuchi M."/>
            <person name="Sato T."/>
        </authorList>
    </citation>
    <scope>CATALYTIC ACTIVITY</scope>
    <scope>ROLE IN SPORULATION</scope>
    <scope>DISRUPTION PHENOTYPE</scope>
</reference>
<reference key="3">
    <citation type="journal article" date="2004" name="J. Bacteriol.">
        <title>Bacillus subtilis StoA is a thiol-disulfide oxidoreductase important for spore cortex synthesis.</title>
        <authorList>
            <person name="Erlendsson L.S."/>
            <person name="Moeller M."/>
            <person name="Hederstedt L."/>
        </authorList>
    </citation>
    <scope>CATALYTIC ACTIVITY</scope>
    <scope>ROLE IN SPORULATION</scope>
</reference>
<reference key="4">
    <citation type="journal article" date="2004" name="Biosci. Biotechnol. Biochem.">
        <title>Expression and purification of the Bacillus subtilis thioredoxin superfamily protein YkvV.</title>
        <authorList>
            <person name="Tanaka R."/>
            <person name="Araki Y."/>
            <person name="Mizukami M."/>
            <person name="Miyauchi A."/>
            <person name="Ishibashi M."/>
            <person name="Tokunaga H."/>
            <person name="Tokunaga M."/>
        </authorList>
    </citation>
    <scope>CATALYTIC ACTIVITY</scope>
</reference>
<proteinExistence type="evidence at protein level"/>
<protein>
    <recommendedName>
        <fullName>Sporulation thiol-disulfide oxidoreductase A</fullName>
    </recommendedName>
    <alternativeName>
        <fullName>Stage IV sporulation protein H</fullName>
    </alternativeName>
</protein>
<gene>
    <name type="primary">stoA</name>
    <name type="synonym">spoIVH</name>
    <name type="ordered locus">BSU13840</name>
</gene>
<organism>
    <name type="scientific">Bacillus subtilis (strain 168)</name>
    <dbReference type="NCBI Taxonomy" id="224308"/>
    <lineage>
        <taxon>Bacteria</taxon>
        <taxon>Bacillati</taxon>
        <taxon>Bacillota</taxon>
        <taxon>Bacilli</taxon>
        <taxon>Bacillales</taxon>
        <taxon>Bacillaceae</taxon>
        <taxon>Bacillus</taxon>
    </lineage>
</organism>
<name>STOA_BACSU</name>
<comment type="function">
    <text evidence="3 4">Thiol-disulfide oxidoreductase with a reductive function, involved in spore cortex synthesis. It could be involved either in breaking disulfide bonds in cortex components or in proteins that are important for cortex synthesis, or in thiol/disulfide bond interchange.</text>
</comment>
<comment type="subcellular location">
    <subcellularLocation>
        <location evidence="5">Spore outer membrane</location>
    </subcellularLocation>
</comment>
<comment type="disruption phenotype">
    <text evidence="3">Mutants have spores sensitive to heat, lysozyme and chloroform, and in which the cortex is absent.</text>
</comment>
<comment type="miscellaneous">
    <text>StoA and ykvU are cotranscribed under the control of sigma E.</text>
</comment>
<comment type="similarity">
    <text evidence="5">Belongs to the thioredoxin family.</text>
</comment>
<dbReference type="EMBL" id="AL009126">
    <property type="protein sequence ID" value="CAB13257.1"/>
    <property type="molecule type" value="Genomic_DNA"/>
</dbReference>
<dbReference type="PIR" id="E69869">
    <property type="entry name" value="E69869"/>
</dbReference>
<dbReference type="RefSeq" id="NP_389267.1">
    <property type="nucleotide sequence ID" value="NC_000964.3"/>
</dbReference>
<dbReference type="RefSeq" id="WP_003245444.1">
    <property type="nucleotide sequence ID" value="NZ_OZ025638.1"/>
</dbReference>
<dbReference type="PDB" id="3ERW">
    <property type="method" value="X-ray"/>
    <property type="resolution" value="2.50 A"/>
    <property type="chains" value="A/B/C/D/E/F/G=22-164"/>
</dbReference>
<dbReference type="PDBsum" id="3ERW"/>
<dbReference type="SMR" id="O31687"/>
<dbReference type="FunCoup" id="O31687">
    <property type="interactions" value="90"/>
</dbReference>
<dbReference type="STRING" id="224308.BSU13840"/>
<dbReference type="PaxDb" id="224308-BSU13840"/>
<dbReference type="DNASU" id="936262"/>
<dbReference type="EnsemblBacteria" id="CAB13257">
    <property type="protein sequence ID" value="CAB13257"/>
    <property type="gene ID" value="BSU_13840"/>
</dbReference>
<dbReference type="GeneID" id="936262"/>
<dbReference type="KEGG" id="bsu:BSU13840"/>
<dbReference type="PATRIC" id="fig|224308.179.peg.1508"/>
<dbReference type="eggNOG" id="COG0526">
    <property type="taxonomic scope" value="Bacteria"/>
</dbReference>
<dbReference type="InParanoid" id="O31687"/>
<dbReference type="OrthoDB" id="25753at2"/>
<dbReference type="PhylomeDB" id="O31687"/>
<dbReference type="BioCyc" id="BSUB:BSU13840-MONOMER"/>
<dbReference type="EvolutionaryTrace" id="O31687"/>
<dbReference type="Proteomes" id="UP000001570">
    <property type="component" value="Chromosome"/>
</dbReference>
<dbReference type="GO" id="GO:0043594">
    <property type="term" value="C:outer endospore membrane"/>
    <property type="evidence" value="ECO:0007669"/>
    <property type="project" value="UniProtKB-SubCell"/>
</dbReference>
<dbReference type="GO" id="GO:0016209">
    <property type="term" value="F:antioxidant activity"/>
    <property type="evidence" value="ECO:0007669"/>
    <property type="project" value="InterPro"/>
</dbReference>
<dbReference type="GO" id="GO:0016491">
    <property type="term" value="F:oxidoreductase activity"/>
    <property type="evidence" value="ECO:0007669"/>
    <property type="project" value="UniProtKB-KW"/>
</dbReference>
<dbReference type="GO" id="GO:0030435">
    <property type="term" value="P:sporulation resulting in formation of a cellular spore"/>
    <property type="evidence" value="ECO:0007669"/>
    <property type="project" value="UniProtKB-KW"/>
</dbReference>
<dbReference type="CDD" id="cd02966">
    <property type="entry name" value="TlpA_like_family"/>
    <property type="match status" value="1"/>
</dbReference>
<dbReference type="Gene3D" id="3.40.30.10">
    <property type="entry name" value="Glutaredoxin"/>
    <property type="match status" value="1"/>
</dbReference>
<dbReference type="InterPro" id="IPR000866">
    <property type="entry name" value="AhpC/TSA"/>
</dbReference>
<dbReference type="InterPro" id="IPR036249">
    <property type="entry name" value="Thioredoxin-like_sf"/>
</dbReference>
<dbReference type="InterPro" id="IPR017937">
    <property type="entry name" value="Thioredoxin_CS"/>
</dbReference>
<dbReference type="InterPro" id="IPR013766">
    <property type="entry name" value="Thioredoxin_domain"/>
</dbReference>
<dbReference type="InterPro" id="IPR050553">
    <property type="entry name" value="Thioredoxin_ResA/DsbE_sf"/>
</dbReference>
<dbReference type="NCBIfam" id="NF041202">
    <property type="entry name" value="StoA_CxxC"/>
    <property type="match status" value="1"/>
</dbReference>
<dbReference type="PANTHER" id="PTHR42852">
    <property type="entry name" value="THIOL:DISULFIDE INTERCHANGE PROTEIN DSBE"/>
    <property type="match status" value="1"/>
</dbReference>
<dbReference type="PANTHER" id="PTHR42852:SF17">
    <property type="entry name" value="THIOREDOXIN-LIKE PROTEIN HI_1115"/>
    <property type="match status" value="1"/>
</dbReference>
<dbReference type="Pfam" id="PF00578">
    <property type="entry name" value="AhpC-TSA"/>
    <property type="match status" value="1"/>
</dbReference>
<dbReference type="SUPFAM" id="SSF52833">
    <property type="entry name" value="Thioredoxin-like"/>
    <property type="match status" value="1"/>
</dbReference>
<dbReference type="PROSITE" id="PS00194">
    <property type="entry name" value="THIOREDOXIN_1"/>
    <property type="match status" value="1"/>
</dbReference>
<dbReference type="PROSITE" id="PS51352">
    <property type="entry name" value="THIOREDOXIN_2"/>
    <property type="match status" value="1"/>
</dbReference>
<keyword id="KW-0002">3D-structure</keyword>
<keyword id="KW-1015">Disulfide bond</keyword>
<keyword id="KW-0472">Membrane</keyword>
<keyword id="KW-0560">Oxidoreductase</keyword>
<keyword id="KW-0676">Redox-active center</keyword>
<keyword id="KW-1185">Reference proteome</keyword>
<keyword id="KW-0732">Signal</keyword>
<keyword id="KW-0749">Sporulation</keyword>
<sequence>MLTKRLLTIYIMLLGLIAWFPGAAQAEEKQPAVPAVFLMKTIEGEDISIPNKGQKTILHFWTSWCPPCKKELPQFQSFYDAHPSDSVKLVTVNLVNSEQNQQVVEDFIKANKLTFPIVLDSKGELMKEYHIITIPTSFLLNEKGEIEKTKIGPMTAEQLKEWTEE</sequence>
<evidence type="ECO:0000255" key="1"/>
<evidence type="ECO:0000255" key="2">
    <source>
        <dbReference type="PROSITE-ProRule" id="PRU00691"/>
    </source>
</evidence>
<evidence type="ECO:0000269" key="3">
    <source>
    </source>
</evidence>
<evidence type="ECO:0000269" key="4">
    <source>
    </source>
</evidence>
<evidence type="ECO:0000305" key="5"/>
<evidence type="ECO:0007829" key="6">
    <source>
        <dbReference type="PDB" id="3ERW"/>
    </source>
</evidence>
<accession>O31687</accession>
<feature type="signal peptide" evidence="1">
    <location>
        <begin position="1"/>
        <end position="26"/>
    </location>
</feature>
<feature type="chain" id="PRO_0000034289" description="Sporulation thiol-disulfide oxidoreductase A">
    <location>
        <begin position="27"/>
        <end position="165"/>
    </location>
</feature>
<feature type="domain" description="Thioredoxin" evidence="2">
    <location>
        <begin position="27"/>
        <end position="165"/>
    </location>
</feature>
<feature type="disulfide bond" description="Redox-active" evidence="5">
    <location>
        <begin position="65"/>
        <end position="68"/>
    </location>
</feature>
<feature type="strand" evidence="6">
    <location>
        <begin position="36"/>
        <end position="40"/>
    </location>
</feature>
<feature type="strand" evidence="6">
    <location>
        <begin position="46"/>
        <end position="50"/>
    </location>
</feature>
<feature type="strand" evidence="6">
    <location>
        <begin position="54"/>
        <end position="61"/>
    </location>
</feature>
<feature type="helix" evidence="6">
    <location>
        <begin position="66"/>
        <end position="81"/>
    </location>
</feature>
<feature type="strand" evidence="6">
    <location>
        <begin position="85"/>
        <end position="93"/>
    </location>
</feature>
<feature type="helix" evidence="6">
    <location>
        <begin position="95"/>
        <end position="97"/>
    </location>
</feature>
<feature type="helix" evidence="6">
    <location>
        <begin position="101"/>
        <end position="110"/>
    </location>
</feature>
<feature type="strand" evidence="6">
    <location>
        <begin position="117"/>
        <end position="119"/>
    </location>
</feature>
<feature type="strand" evidence="6">
    <location>
        <begin position="121"/>
        <end position="123"/>
    </location>
</feature>
<feature type="helix" evidence="6">
    <location>
        <begin position="124"/>
        <end position="128"/>
    </location>
</feature>
<feature type="strand" evidence="6">
    <location>
        <begin position="133"/>
        <end position="140"/>
    </location>
</feature>
<feature type="strand" evidence="6">
    <location>
        <begin position="146"/>
        <end position="152"/>
    </location>
</feature>
<feature type="helix" evidence="6">
    <location>
        <begin position="156"/>
        <end position="163"/>
    </location>
</feature>